<geneLocation type="mitochondrion"/>
<keyword id="KW-0249">Electron transport</keyword>
<keyword id="KW-0472">Membrane</keyword>
<keyword id="KW-0496">Mitochondrion</keyword>
<keyword id="KW-0520">NAD</keyword>
<keyword id="KW-0679">Respiratory chain</keyword>
<keyword id="KW-1278">Translocase</keyword>
<keyword id="KW-0812">Transmembrane</keyword>
<keyword id="KW-1133">Transmembrane helix</keyword>
<keyword id="KW-0813">Transport</keyword>
<keyword id="KW-0830">Ubiquinone</keyword>
<gene>
    <name type="primary">MT-ND3</name>
    <name type="synonym">MTND3</name>
    <name type="synonym">NADH3</name>
    <name type="synonym">ND3</name>
</gene>
<evidence type="ECO:0000250" key="1"/>
<evidence type="ECO:0000255" key="2"/>
<evidence type="ECO:0000305" key="3"/>
<name>NU3M_STRCA</name>
<proteinExistence type="inferred from homology"/>
<comment type="function">
    <text evidence="1">Core subunit of the mitochondrial membrane respiratory chain NADH dehydrogenase (Complex I) that is believed to belong to the minimal assembly required for catalysis. Complex I functions in the transfer of electrons from NADH to the respiratory chain. The immediate electron acceptor for the enzyme is believed to be ubiquinone (By similarity).</text>
</comment>
<comment type="catalytic activity">
    <reaction>
        <text>a ubiquinone + NADH + 5 H(+)(in) = a ubiquinol + NAD(+) + 4 H(+)(out)</text>
        <dbReference type="Rhea" id="RHEA:29091"/>
        <dbReference type="Rhea" id="RHEA-COMP:9565"/>
        <dbReference type="Rhea" id="RHEA-COMP:9566"/>
        <dbReference type="ChEBI" id="CHEBI:15378"/>
        <dbReference type="ChEBI" id="CHEBI:16389"/>
        <dbReference type="ChEBI" id="CHEBI:17976"/>
        <dbReference type="ChEBI" id="CHEBI:57540"/>
        <dbReference type="ChEBI" id="CHEBI:57945"/>
        <dbReference type="EC" id="7.1.1.2"/>
    </reaction>
</comment>
<comment type="subcellular location">
    <subcellularLocation>
        <location evidence="1">Mitochondrion membrane</location>
        <topology evidence="1">Multi-pass membrane protein</topology>
    </subcellularLocation>
</comment>
<comment type="similarity">
    <text evidence="3">Belongs to the complex I subunit 3 family.</text>
</comment>
<dbReference type="EC" id="7.1.1.2"/>
<dbReference type="EMBL" id="Y12025">
    <property type="protein sequence ID" value="CAA72751.1"/>
    <property type="status" value="ALT_SEQ"/>
    <property type="molecule type" value="Genomic_DNA"/>
</dbReference>
<dbReference type="EMBL" id="AF338715">
    <property type="protein sequence ID" value="AAK53353.1"/>
    <property type="molecule type" value="Genomic_DNA"/>
</dbReference>
<dbReference type="EMBL" id="AF069430">
    <property type="protein sequence ID" value="AAD09391.1"/>
    <property type="molecule type" value="Genomic_DNA"/>
</dbReference>
<dbReference type="PIR" id="H90612">
    <property type="entry name" value="H90612"/>
</dbReference>
<dbReference type="PIR" id="T11526">
    <property type="entry name" value="T11526"/>
</dbReference>
<dbReference type="RefSeq" id="NP_115448.1">
    <property type="nucleotide sequence ID" value="NC_002785.1"/>
</dbReference>
<dbReference type="SMR" id="O79102"/>
<dbReference type="GeneID" id="803271"/>
<dbReference type="CTD" id="4537"/>
<dbReference type="GO" id="GO:0031966">
    <property type="term" value="C:mitochondrial membrane"/>
    <property type="evidence" value="ECO:0007669"/>
    <property type="project" value="UniProtKB-SubCell"/>
</dbReference>
<dbReference type="GO" id="GO:0030964">
    <property type="term" value="C:NADH dehydrogenase complex"/>
    <property type="evidence" value="ECO:0007669"/>
    <property type="project" value="TreeGrafter"/>
</dbReference>
<dbReference type="GO" id="GO:0008137">
    <property type="term" value="F:NADH dehydrogenase (ubiquinone) activity"/>
    <property type="evidence" value="ECO:0007669"/>
    <property type="project" value="UniProtKB-EC"/>
</dbReference>
<dbReference type="FunFam" id="1.20.58.1610:FF:000004">
    <property type="entry name" value="NADH-quinone oxidoreductase subunit A"/>
    <property type="match status" value="1"/>
</dbReference>
<dbReference type="Gene3D" id="1.20.58.1610">
    <property type="entry name" value="NADH:ubiquinone/plastoquinone oxidoreductase, chain 3"/>
    <property type="match status" value="1"/>
</dbReference>
<dbReference type="InterPro" id="IPR000440">
    <property type="entry name" value="NADH_UbQ/plastoQ_OxRdtase_su3"/>
</dbReference>
<dbReference type="InterPro" id="IPR038430">
    <property type="entry name" value="NDAH_ubi_oxred_su3_sf"/>
</dbReference>
<dbReference type="PANTHER" id="PTHR11058">
    <property type="entry name" value="NADH-UBIQUINONE OXIDOREDUCTASE CHAIN 3"/>
    <property type="match status" value="1"/>
</dbReference>
<dbReference type="PANTHER" id="PTHR11058:SF9">
    <property type="entry name" value="NADH-UBIQUINONE OXIDOREDUCTASE CHAIN 3"/>
    <property type="match status" value="1"/>
</dbReference>
<dbReference type="Pfam" id="PF00507">
    <property type="entry name" value="Oxidored_q4"/>
    <property type="match status" value="1"/>
</dbReference>
<reference key="1">
    <citation type="journal article" date="1997" name="Mol. Biol. Evol.">
        <title>The mtDNA sequence of the ostrich and the divergence between paleognathous and neognathous birds.</title>
        <authorList>
            <person name="Harlid A."/>
            <person name="Janke A."/>
            <person name="Arnason U."/>
        </authorList>
    </citation>
    <scope>NUCLEOTIDE SEQUENCE [GENOMIC DNA]</scope>
</reference>
<reference key="2">
    <citation type="journal article" date="2001" name="Proc. R. Soc. B">
        <title>Complete mitochondrial DNA genome sequences of extinct birds: ratite phylogenetics and the vicariance biogeography hypothesis.</title>
        <authorList>
            <person name="Haddrath O."/>
            <person name="Baker A.J."/>
        </authorList>
    </citation>
    <scope>NUCLEOTIDE SEQUENCE [GENOMIC DNA]</scope>
</reference>
<reference key="3">
    <citation type="submission" date="1998-06" db="EMBL/GenBank/DDBJ databases">
        <title>Translational frameshifting in animal mitochondrial DNA.</title>
        <authorList>
            <person name="Mindell D.P."/>
            <person name="Sorenson M.D."/>
            <person name="Dimcheff D.E."/>
        </authorList>
    </citation>
    <scope>NUCLEOTIDE SEQUENCE [GENOMIC DNA] OF 1-108</scope>
</reference>
<sequence length="116" mass="13227">MNMITFMLLLSLTLSIILTTINFWLAQMNPDAEKLSPYECGFDPLGSARLPFSIRFFLVAILFLLFDLEIALLLPLPWAIQLSQPLLTLLWTSILLLLLTLGLVYEWIQGGLEWAE</sequence>
<accession>O79102</accession>
<accession>O21404</accession>
<accession>Q957X4</accession>
<organism>
    <name type="scientific">Struthio camelus</name>
    <name type="common">Common ostrich</name>
    <dbReference type="NCBI Taxonomy" id="8801"/>
    <lineage>
        <taxon>Eukaryota</taxon>
        <taxon>Metazoa</taxon>
        <taxon>Chordata</taxon>
        <taxon>Craniata</taxon>
        <taxon>Vertebrata</taxon>
        <taxon>Euteleostomi</taxon>
        <taxon>Archelosauria</taxon>
        <taxon>Archosauria</taxon>
        <taxon>Dinosauria</taxon>
        <taxon>Saurischia</taxon>
        <taxon>Theropoda</taxon>
        <taxon>Coelurosauria</taxon>
        <taxon>Aves</taxon>
        <taxon>Palaeognathae</taxon>
        <taxon>Struthioniformes</taxon>
        <taxon>Struthionidae</taxon>
        <taxon>Struthio</taxon>
    </lineage>
</organism>
<feature type="chain" id="PRO_0000117836" description="NADH-ubiquinone oxidoreductase chain 3">
    <location>
        <begin position="1"/>
        <end position="116"/>
    </location>
</feature>
<feature type="transmembrane region" description="Helical" evidence="2">
    <location>
        <begin position="6"/>
        <end position="26"/>
    </location>
</feature>
<feature type="transmembrane region" description="Helical" evidence="2">
    <location>
        <begin position="56"/>
        <end position="76"/>
    </location>
</feature>
<feature type="transmembrane region" description="Helical" evidence="2">
    <location>
        <begin position="85"/>
        <end position="105"/>
    </location>
</feature>
<feature type="sequence conflict" description="In Ref. 1 and 3." evidence="3" ref="1 3">
    <original>A</original>
    <variation>T</variation>
    <location>
        <position position="32"/>
    </location>
</feature>
<protein>
    <recommendedName>
        <fullName>NADH-ubiquinone oxidoreductase chain 3</fullName>
        <ecNumber>7.1.1.2</ecNumber>
    </recommendedName>
    <alternativeName>
        <fullName>NADH dehydrogenase subunit 3</fullName>
    </alternativeName>
</protein>